<comment type="subcellular location">
    <subcellularLocation>
        <location evidence="2">Membrane</location>
        <topology evidence="2">Single-pass membrane protein</topology>
    </subcellularLocation>
</comment>
<dbReference type="EMBL" id="L42023">
    <property type="protein sequence ID" value="AAC22780.1"/>
    <property type="molecule type" value="Genomic_DNA"/>
</dbReference>
<dbReference type="PIR" id="F64020">
    <property type="entry name" value="F64020"/>
</dbReference>
<dbReference type="SMR" id="P44114"/>
<dbReference type="STRING" id="71421.HI_1126"/>
<dbReference type="EnsemblBacteria" id="AAC22780">
    <property type="protein sequence ID" value="AAC22780"/>
    <property type="gene ID" value="HI_1126"/>
</dbReference>
<dbReference type="KEGG" id="hin:HI_1126"/>
<dbReference type="HOGENOM" id="CLU_2633137_0_0_6"/>
<dbReference type="Proteomes" id="UP000000579">
    <property type="component" value="Chromosome"/>
</dbReference>
<dbReference type="GO" id="GO:0016020">
    <property type="term" value="C:membrane"/>
    <property type="evidence" value="ECO:0007669"/>
    <property type="project" value="UniProtKB-SubCell"/>
</dbReference>
<dbReference type="InterPro" id="IPR018886">
    <property type="entry name" value="UPF0547"/>
</dbReference>
<dbReference type="Pfam" id="PF10571">
    <property type="entry name" value="UPF0547"/>
    <property type="match status" value="1"/>
</dbReference>
<accession>P44114</accession>
<reference key="1">
    <citation type="journal article" date="1995" name="Science">
        <title>Whole-genome random sequencing and assembly of Haemophilus influenzae Rd.</title>
        <authorList>
            <person name="Fleischmann R.D."/>
            <person name="Adams M.D."/>
            <person name="White O."/>
            <person name="Clayton R.A."/>
            <person name="Kirkness E.F."/>
            <person name="Kerlavage A.R."/>
            <person name="Bult C.J."/>
            <person name="Tomb J.-F."/>
            <person name="Dougherty B.A."/>
            <person name="Merrick J.M."/>
            <person name="McKenney K."/>
            <person name="Sutton G.G."/>
            <person name="FitzHugh W."/>
            <person name="Fields C.A."/>
            <person name="Gocayne J.D."/>
            <person name="Scott J.D."/>
            <person name="Shirley R."/>
            <person name="Liu L.-I."/>
            <person name="Glodek A."/>
            <person name="Kelley J.M."/>
            <person name="Weidman J.F."/>
            <person name="Phillips C.A."/>
            <person name="Spriggs T."/>
            <person name="Hedblom E."/>
            <person name="Cotton M.D."/>
            <person name="Utterback T.R."/>
            <person name="Hanna M.C."/>
            <person name="Nguyen D.T."/>
            <person name="Saudek D.M."/>
            <person name="Brandon R.C."/>
            <person name="Fine L.D."/>
            <person name="Fritchman J.L."/>
            <person name="Fuhrmann J.L."/>
            <person name="Geoghagen N.S.M."/>
            <person name="Gnehm C.L."/>
            <person name="McDonald L.A."/>
            <person name="Small K.V."/>
            <person name="Fraser C.M."/>
            <person name="Smith H.O."/>
            <person name="Venter J.C."/>
        </authorList>
    </citation>
    <scope>NUCLEOTIDE SEQUENCE [LARGE SCALE GENOMIC DNA]</scope>
    <source>
        <strain>ATCC 51907 / DSM 11121 / KW20 / Rd</strain>
    </source>
</reference>
<keyword id="KW-0472">Membrane</keyword>
<keyword id="KW-1185">Reference proteome</keyword>
<keyword id="KW-0812">Transmembrane</keyword>
<keyword id="KW-1133">Transmembrane helix</keyword>
<name>Y1126_HAEIN</name>
<proteinExistence type="predicted"/>
<feature type="chain" id="PRO_0000078005" description="Uncharacterized protein HI_1126">
    <location>
        <begin position="1"/>
        <end position="76"/>
    </location>
</feature>
<feature type="transmembrane region" description="Helical" evidence="1">
    <location>
        <begin position="53"/>
        <end position="70"/>
    </location>
</feature>
<gene>
    <name type="ordered locus">HI_1126</name>
</gene>
<protein>
    <recommendedName>
        <fullName>Uncharacterized protein HI_1126</fullName>
    </recommendedName>
</protein>
<evidence type="ECO:0000255" key="1"/>
<evidence type="ECO:0000305" key="2"/>
<sequence>MSLTRCPECRKKISENAENCPNCGFSFKQKDLEMYKQRLEARRLHNEEVNRKSTKLHIIWFCIFAIFIAVTSWMVN</sequence>
<organism>
    <name type="scientific">Haemophilus influenzae (strain ATCC 51907 / DSM 11121 / KW20 / Rd)</name>
    <dbReference type="NCBI Taxonomy" id="71421"/>
    <lineage>
        <taxon>Bacteria</taxon>
        <taxon>Pseudomonadati</taxon>
        <taxon>Pseudomonadota</taxon>
        <taxon>Gammaproteobacteria</taxon>
        <taxon>Pasteurellales</taxon>
        <taxon>Pasteurellaceae</taxon>
        <taxon>Haemophilus</taxon>
    </lineage>
</organism>